<feature type="chain" id="PRO_1000139214" description="Bifunctional protein PyrR">
    <location>
        <begin position="1"/>
        <end position="178"/>
    </location>
</feature>
<feature type="short sequence motif" description="PRPP-binding" evidence="1">
    <location>
        <begin position="99"/>
        <end position="111"/>
    </location>
</feature>
<accession>B0KA38</accession>
<protein>
    <recommendedName>
        <fullName evidence="1">Bifunctional protein PyrR</fullName>
    </recommendedName>
    <domain>
        <recommendedName>
            <fullName evidence="1">Pyrimidine operon regulatory protein</fullName>
        </recommendedName>
    </domain>
    <domain>
        <recommendedName>
            <fullName evidence="1">Uracil phosphoribosyltransferase</fullName>
            <shortName evidence="1">UPRTase</shortName>
            <ecNumber evidence="1">2.4.2.9</ecNumber>
        </recommendedName>
    </domain>
</protein>
<organism>
    <name type="scientific">Thermoanaerobacter pseudethanolicus (strain ATCC 33223 / 39E)</name>
    <name type="common">Clostridium thermohydrosulfuricum</name>
    <dbReference type="NCBI Taxonomy" id="340099"/>
    <lineage>
        <taxon>Bacteria</taxon>
        <taxon>Bacillati</taxon>
        <taxon>Bacillota</taxon>
        <taxon>Clostridia</taxon>
        <taxon>Thermoanaerobacterales</taxon>
        <taxon>Thermoanaerobacteraceae</taxon>
        <taxon>Thermoanaerobacter</taxon>
    </lineage>
</organism>
<proteinExistence type="inferred from homology"/>
<name>PYRR_THEP3</name>
<comment type="function">
    <text evidence="1">Regulates transcriptional attenuation of the pyrimidine nucleotide (pyr) operon by binding in a uridine-dependent manner to specific sites on pyr mRNA. This disrupts an antiterminator hairpin in the RNA and favors formation of a downstream transcription terminator, leading to a reduced expression of downstream genes.</text>
</comment>
<comment type="function">
    <text evidence="1">Also displays a weak uracil phosphoribosyltransferase activity which is not physiologically significant.</text>
</comment>
<comment type="catalytic activity">
    <reaction evidence="1">
        <text>UMP + diphosphate = 5-phospho-alpha-D-ribose 1-diphosphate + uracil</text>
        <dbReference type="Rhea" id="RHEA:13017"/>
        <dbReference type="ChEBI" id="CHEBI:17568"/>
        <dbReference type="ChEBI" id="CHEBI:33019"/>
        <dbReference type="ChEBI" id="CHEBI:57865"/>
        <dbReference type="ChEBI" id="CHEBI:58017"/>
        <dbReference type="EC" id="2.4.2.9"/>
    </reaction>
</comment>
<comment type="subunit">
    <text evidence="1">Homodimer and homohexamer; in equilibrium.</text>
</comment>
<comment type="similarity">
    <text evidence="1">Belongs to the purine/pyrimidine phosphoribosyltransferase family. PyrR subfamily.</text>
</comment>
<evidence type="ECO:0000255" key="1">
    <source>
        <dbReference type="HAMAP-Rule" id="MF_01219"/>
    </source>
</evidence>
<keyword id="KW-0328">Glycosyltransferase</keyword>
<keyword id="KW-1185">Reference proteome</keyword>
<keyword id="KW-0694">RNA-binding</keyword>
<keyword id="KW-0804">Transcription</keyword>
<keyword id="KW-0805">Transcription regulation</keyword>
<keyword id="KW-0806">Transcription termination</keyword>
<keyword id="KW-0808">Transferase</keyword>
<gene>
    <name evidence="1" type="primary">pyrR</name>
    <name type="ordered locus">Teth39_1347</name>
</gene>
<reference key="1">
    <citation type="submission" date="2008-01" db="EMBL/GenBank/DDBJ databases">
        <title>Complete sequence of Thermoanaerobacter pseudethanolicus 39E.</title>
        <authorList>
            <person name="Copeland A."/>
            <person name="Lucas S."/>
            <person name="Lapidus A."/>
            <person name="Barry K."/>
            <person name="Glavina del Rio T."/>
            <person name="Dalin E."/>
            <person name="Tice H."/>
            <person name="Pitluck S."/>
            <person name="Bruce D."/>
            <person name="Goodwin L."/>
            <person name="Saunders E."/>
            <person name="Brettin T."/>
            <person name="Detter J.C."/>
            <person name="Han C."/>
            <person name="Schmutz J."/>
            <person name="Larimer F."/>
            <person name="Land M."/>
            <person name="Hauser L."/>
            <person name="Kyrpides N."/>
            <person name="Lykidis A."/>
            <person name="Hemme C."/>
            <person name="Fields M.W."/>
            <person name="He Z."/>
            <person name="Zhou J."/>
            <person name="Richardson P."/>
        </authorList>
    </citation>
    <scope>NUCLEOTIDE SEQUENCE [LARGE SCALE GENOMIC DNA]</scope>
    <source>
        <strain>ATCC 33223 / DSM 2355 / 39E</strain>
    </source>
</reference>
<dbReference type="EC" id="2.4.2.9" evidence="1"/>
<dbReference type="EMBL" id="CP000924">
    <property type="protein sequence ID" value="ABY95001.1"/>
    <property type="molecule type" value="Genomic_DNA"/>
</dbReference>
<dbReference type="RefSeq" id="WP_003868400.1">
    <property type="nucleotide sequence ID" value="NC_010321.1"/>
</dbReference>
<dbReference type="SMR" id="B0KA38"/>
<dbReference type="STRING" id="340099.Teth39_1347"/>
<dbReference type="KEGG" id="tpd:Teth39_1347"/>
<dbReference type="eggNOG" id="COG2065">
    <property type="taxonomic scope" value="Bacteria"/>
</dbReference>
<dbReference type="HOGENOM" id="CLU_094234_2_1_9"/>
<dbReference type="Proteomes" id="UP000002156">
    <property type="component" value="Chromosome"/>
</dbReference>
<dbReference type="GO" id="GO:0003723">
    <property type="term" value="F:RNA binding"/>
    <property type="evidence" value="ECO:0007669"/>
    <property type="project" value="UniProtKB-UniRule"/>
</dbReference>
<dbReference type="GO" id="GO:0004845">
    <property type="term" value="F:uracil phosphoribosyltransferase activity"/>
    <property type="evidence" value="ECO:0007669"/>
    <property type="project" value="UniProtKB-UniRule"/>
</dbReference>
<dbReference type="GO" id="GO:0006353">
    <property type="term" value="P:DNA-templated transcription termination"/>
    <property type="evidence" value="ECO:0007669"/>
    <property type="project" value="UniProtKB-UniRule"/>
</dbReference>
<dbReference type="CDD" id="cd06223">
    <property type="entry name" value="PRTases_typeI"/>
    <property type="match status" value="1"/>
</dbReference>
<dbReference type="FunFam" id="3.40.50.2020:FF:000020">
    <property type="entry name" value="Bifunctional protein PyrR"/>
    <property type="match status" value="1"/>
</dbReference>
<dbReference type="Gene3D" id="3.40.50.2020">
    <property type="match status" value="1"/>
</dbReference>
<dbReference type="HAMAP" id="MF_01219">
    <property type="entry name" value="PyrR"/>
    <property type="match status" value="1"/>
</dbReference>
<dbReference type="InterPro" id="IPR000836">
    <property type="entry name" value="PRibTrfase_dom"/>
</dbReference>
<dbReference type="InterPro" id="IPR029057">
    <property type="entry name" value="PRTase-like"/>
</dbReference>
<dbReference type="InterPro" id="IPR023050">
    <property type="entry name" value="PyrR"/>
</dbReference>
<dbReference type="InterPro" id="IPR050137">
    <property type="entry name" value="PyrR_bifunctional"/>
</dbReference>
<dbReference type="NCBIfam" id="NF003548">
    <property type="entry name" value="PRK05205.1-4"/>
    <property type="match status" value="1"/>
</dbReference>
<dbReference type="NCBIfam" id="NF003549">
    <property type="entry name" value="PRK05205.1-5"/>
    <property type="match status" value="1"/>
</dbReference>
<dbReference type="PANTHER" id="PTHR11608">
    <property type="entry name" value="BIFUNCTIONAL PROTEIN PYRR"/>
    <property type="match status" value="1"/>
</dbReference>
<dbReference type="PANTHER" id="PTHR11608:SF0">
    <property type="entry name" value="BIFUNCTIONAL PROTEIN PYRR"/>
    <property type="match status" value="1"/>
</dbReference>
<dbReference type="Pfam" id="PF00156">
    <property type="entry name" value="Pribosyltran"/>
    <property type="match status" value="1"/>
</dbReference>
<dbReference type="SUPFAM" id="SSF53271">
    <property type="entry name" value="PRTase-like"/>
    <property type="match status" value="1"/>
</dbReference>
<sequence length="178" mass="19907">MKIKAEIMDEKAIDRALIRIAHEIVERNKGIEDVVLVGIKTRGVPLAERIAKYISRIEGKKPPVGSLDITLYRDDLTTDLEQPLVKKKDIGVDVVGKIVVLVDDVIYTGRTIRAAMDAIIDLGRPKAIQLAELIDRGHRELPIKPDYVGKNVPTSKNEIVNVMLEEVDKVNRVVITEK</sequence>